<comment type="function">
    <text evidence="2">Component of the cytochrome c oxidase, the last enzyme in the mitochondrial electron transport chain which drives oxidative phosphorylation. The respiratory chain contains 3 multisubunit complexes succinate dehydrogenase (complex II, CII), ubiquinol-cytochrome c oxidoreductase (cytochrome b-c1 complex, complex III, CIII) and cytochrome c oxidase (complex IV, CIV), that cooperate to transfer electrons derived from NADH and succinate to molecular oxygen, creating an electrochemical gradient over the inner membrane that drives transmembrane transport and the ATP synthase. Cytochrome c oxidase is the component of the respiratory chain that catalyzes the reduction of oxygen to water. Electrons originating from reduced cytochrome c in the intermembrane space (IMS) are transferred via the dinuclear copper A center (CU(A)) of subunit 2 and heme A of subunit 1 to the active site in subunit 1, a binuclear center (BNC) formed by heme A3 and copper B (CU(B)). The BNC reduces molecular oxygen to 2 water molecules using 4 electrons from cytochrome c in the IMS and 4 protons from the mitochondrial matrix.</text>
</comment>
<comment type="catalytic activity">
    <reaction evidence="2">
        <text>4 Fe(II)-[cytochrome c] + O2 + 8 H(+)(in) = 4 Fe(III)-[cytochrome c] + 2 H2O + 4 H(+)(out)</text>
        <dbReference type="Rhea" id="RHEA:11436"/>
        <dbReference type="Rhea" id="RHEA-COMP:10350"/>
        <dbReference type="Rhea" id="RHEA-COMP:14399"/>
        <dbReference type="ChEBI" id="CHEBI:15377"/>
        <dbReference type="ChEBI" id="CHEBI:15378"/>
        <dbReference type="ChEBI" id="CHEBI:15379"/>
        <dbReference type="ChEBI" id="CHEBI:29033"/>
        <dbReference type="ChEBI" id="CHEBI:29034"/>
        <dbReference type="EC" id="7.1.1.9"/>
    </reaction>
    <physiologicalReaction direction="left-to-right" evidence="2">
        <dbReference type="Rhea" id="RHEA:11437"/>
    </physiologicalReaction>
</comment>
<comment type="subunit">
    <text evidence="1">Component of the cytochrome c oxidase (complex IV, CIV), a multisubunit enzyme composed of 14 subunits. The complex is composed of a catalytic core of 3 subunits MT-CO1, MT-CO2 and MT-CO3, encoded in the mitochondrial DNA, and 11 supernumerary subunits COX4I, COX5A, COX5B, COX6A, COX6B, COX6C, COX7A, COX7B, COX7C, COX8 and NDUFA4, which are encoded in the nuclear genome. The complex exists as a monomer or a dimer and forms supercomplexes (SCs) in the inner mitochondrial membrane with NADH-ubiquinone oxidoreductase (complex I, CI) and ubiquinol-cytochrome c oxidoreductase (cytochrome b-c1 complex, complex III, CIII), resulting in different assemblies (supercomplex SCI(1)III(2)IV(1) and megacomplex MCI(2)III(2)IV(2)).</text>
</comment>
<comment type="subcellular location">
    <subcellularLocation>
        <location evidence="1">Mitochondrion inner membrane</location>
        <topology evidence="1">Multi-pass membrane protein</topology>
    </subcellularLocation>
</comment>
<comment type="similarity">
    <text evidence="3">Belongs to the cytochrome c oxidase subunit 3 family.</text>
</comment>
<sequence length="261" mass="29691">MAHQAHAYHMVDPSPWPLTGAIAALLLTSGTAVWFHFHSLTLLTLGNVLLLLTMYQWWRDIIREGTFQGHHTPPVQKGLRYGMILFITSEVFFFLGFFWAFYHASLAPTPELGGCWPPTGITTLDPFEVPLLNTAVLLASGVTVTWAHHSIMEGERKQTIQALTLTILLGFYFTFLQGMEYYEAPFTIADGVYGSTFFVATGFHGLHVIIGSTFLAVCLLRQVQYHFTSEHHFGFEAAAWYWHFVDVVWLFLYVSIYWWGS</sequence>
<feature type="chain" id="PRO_0000183819" description="Cytochrome c oxidase subunit 3">
    <location>
        <begin position="1"/>
        <end position="261"/>
    </location>
</feature>
<feature type="topological domain" description="Mitochondrial matrix" evidence="1">
    <location>
        <begin position="1"/>
        <end position="15"/>
    </location>
</feature>
<feature type="transmembrane region" description="Helical; Name=I" evidence="1">
    <location>
        <begin position="16"/>
        <end position="34"/>
    </location>
</feature>
<feature type="topological domain" description="Mitochondrial intermembrane" evidence="1">
    <location>
        <begin position="35"/>
        <end position="40"/>
    </location>
</feature>
<feature type="transmembrane region" description="Helical; Name=II" evidence="1">
    <location>
        <begin position="41"/>
        <end position="66"/>
    </location>
</feature>
<feature type="topological domain" description="Mitochondrial matrix" evidence="1">
    <location>
        <begin position="67"/>
        <end position="72"/>
    </location>
</feature>
<feature type="transmembrane region" description="Helical; Name=III" evidence="1">
    <location>
        <begin position="73"/>
        <end position="105"/>
    </location>
</feature>
<feature type="topological domain" description="Mitochondrial intermembrane" evidence="1">
    <location>
        <begin position="106"/>
        <end position="128"/>
    </location>
</feature>
<feature type="transmembrane region" description="Helical; Name=IV" evidence="1">
    <location>
        <begin position="129"/>
        <end position="152"/>
    </location>
</feature>
<feature type="topological domain" description="Mitochondrial matrix" evidence="1">
    <location>
        <begin position="153"/>
        <end position="155"/>
    </location>
</feature>
<feature type="transmembrane region" description="Helical; Name=V" evidence="1">
    <location>
        <begin position="156"/>
        <end position="183"/>
    </location>
</feature>
<feature type="topological domain" description="Mitochondrial intermembrane" evidence="1">
    <location>
        <begin position="184"/>
        <end position="190"/>
    </location>
</feature>
<feature type="transmembrane region" description="Helical; Name=VI" evidence="1">
    <location>
        <begin position="191"/>
        <end position="223"/>
    </location>
</feature>
<feature type="topological domain" description="Mitochondrial matrix" evidence="1">
    <location>
        <begin position="224"/>
        <end position="232"/>
    </location>
</feature>
<feature type="transmembrane region" description="Helical; Name=VII" evidence="1">
    <location>
        <begin position="233"/>
        <end position="256"/>
    </location>
</feature>
<feature type="topological domain" description="Mitochondrial intermembrane" evidence="1">
    <location>
        <begin position="257"/>
        <end position="261"/>
    </location>
</feature>
<accession>P69218</accession>
<accession>P20683</accession>
<keyword id="KW-0472">Membrane</keyword>
<keyword id="KW-0496">Mitochondrion</keyword>
<keyword id="KW-0999">Mitochondrion inner membrane</keyword>
<keyword id="KW-1278">Translocase</keyword>
<keyword id="KW-0812">Transmembrane</keyword>
<keyword id="KW-1133">Transmembrane helix</keyword>
<proteinExistence type="inferred from homology"/>
<reference key="1">
    <citation type="journal article" date="1989" name="J. Mol. Evol.">
        <title>Variation in salmonid mitochondrial DNA: evolutionary constraints and mechanisms of substitution.</title>
        <authorList>
            <person name="Thomas W.K."/>
            <person name="Beckenbach A.T."/>
        </authorList>
    </citation>
    <scope>NUCLEOTIDE SEQUENCE</scope>
</reference>
<organism>
    <name type="scientific">Oncorhynchus nerka</name>
    <name type="common">Sockeye salmon</name>
    <name type="synonym">Salmo nerka</name>
    <dbReference type="NCBI Taxonomy" id="8023"/>
    <lineage>
        <taxon>Eukaryota</taxon>
        <taxon>Metazoa</taxon>
        <taxon>Chordata</taxon>
        <taxon>Craniata</taxon>
        <taxon>Vertebrata</taxon>
        <taxon>Euteleostomi</taxon>
        <taxon>Actinopterygii</taxon>
        <taxon>Neopterygii</taxon>
        <taxon>Teleostei</taxon>
        <taxon>Protacanthopterygii</taxon>
        <taxon>Salmoniformes</taxon>
        <taxon>Salmonidae</taxon>
        <taxon>Salmoninae</taxon>
        <taxon>Oncorhynchus</taxon>
    </lineage>
</organism>
<name>COX3_ONCNE</name>
<geneLocation type="mitochondrion"/>
<evidence type="ECO:0000250" key="1">
    <source>
        <dbReference type="UniProtKB" id="P00415"/>
    </source>
</evidence>
<evidence type="ECO:0000250" key="2">
    <source>
        <dbReference type="UniProtKB" id="P00420"/>
    </source>
</evidence>
<evidence type="ECO:0000305" key="3"/>
<dbReference type="EC" id="7.1.1.9"/>
<dbReference type="PIR" id="A30396">
    <property type="entry name" value="A30396"/>
</dbReference>
<dbReference type="SMR" id="P69218"/>
<dbReference type="GO" id="GO:0005743">
    <property type="term" value="C:mitochondrial inner membrane"/>
    <property type="evidence" value="ECO:0007669"/>
    <property type="project" value="UniProtKB-SubCell"/>
</dbReference>
<dbReference type="GO" id="GO:0045277">
    <property type="term" value="C:respiratory chain complex IV"/>
    <property type="evidence" value="ECO:0000250"/>
    <property type="project" value="UniProtKB"/>
</dbReference>
<dbReference type="GO" id="GO:0004129">
    <property type="term" value="F:cytochrome-c oxidase activity"/>
    <property type="evidence" value="ECO:0007669"/>
    <property type="project" value="UniProtKB-EC"/>
</dbReference>
<dbReference type="GO" id="GO:0006123">
    <property type="term" value="P:mitochondrial electron transport, cytochrome c to oxygen"/>
    <property type="evidence" value="ECO:0007669"/>
    <property type="project" value="TreeGrafter"/>
</dbReference>
<dbReference type="CDD" id="cd01665">
    <property type="entry name" value="Cyt_c_Oxidase_III"/>
    <property type="match status" value="1"/>
</dbReference>
<dbReference type="FunFam" id="1.10.287.70:FF:000048">
    <property type="entry name" value="Cytochrome c oxidase subunit 3"/>
    <property type="match status" value="1"/>
</dbReference>
<dbReference type="FunFam" id="1.20.120.80:FF:000002">
    <property type="entry name" value="Cytochrome c oxidase subunit 3"/>
    <property type="match status" value="1"/>
</dbReference>
<dbReference type="Gene3D" id="1.10.287.70">
    <property type="match status" value="1"/>
</dbReference>
<dbReference type="Gene3D" id="1.20.120.80">
    <property type="entry name" value="Cytochrome c oxidase, subunit III, four-helix bundle"/>
    <property type="match status" value="1"/>
</dbReference>
<dbReference type="InterPro" id="IPR024791">
    <property type="entry name" value="Cyt_c/ubiquinol_Oxase_su3"/>
</dbReference>
<dbReference type="InterPro" id="IPR033945">
    <property type="entry name" value="Cyt_c_oxase_su3_dom"/>
</dbReference>
<dbReference type="InterPro" id="IPR000298">
    <property type="entry name" value="Cyt_c_oxidase-like_su3"/>
</dbReference>
<dbReference type="InterPro" id="IPR035973">
    <property type="entry name" value="Cyt_c_oxidase_su3-like_sf"/>
</dbReference>
<dbReference type="InterPro" id="IPR013833">
    <property type="entry name" value="Cyt_c_oxidase_su3_a-hlx"/>
</dbReference>
<dbReference type="PANTHER" id="PTHR11403:SF7">
    <property type="entry name" value="CYTOCHROME C OXIDASE SUBUNIT 3"/>
    <property type="match status" value="1"/>
</dbReference>
<dbReference type="PANTHER" id="PTHR11403">
    <property type="entry name" value="CYTOCHROME C OXIDASE SUBUNIT III"/>
    <property type="match status" value="1"/>
</dbReference>
<dbReference type="Pfam" id="PF00510">
    <property type="entry name" value="COX3"/>
    <property type="match status" value="1"/>
</dbReference>
<dbReference type="SUPFAM" id="SSF81452">
    <property type="entry name" value="Cytochrome c oxidase subunit III-like"/>
    <property type="match status" value="1"/>
</dbReference>
<dbReference type="PROSITE" id="PS50253">
    <property type="entry name" value="COX3"/>
    <property type="match status" value="1"/>
</dbReference>
<gene>
    <name type="primary">mt-co3</name>
    <name type="synonym">coiii</name>
    <name type="synonym">coxiii</name>
    <name type="synonym">mtco3</name>
</gene>
<protein>
    <recommendedName>
        <fullName>Cytochrome c oxidase subunit 3</fullName>
        <ecNumber>7.1.1.9</ecNumber>
    </recommendedName>
    <alternativeName>
        <fullName>Cytochrome c oxidase polypeptide III</fullName>
    </alternativeName>
</protein>